<evidence type="ECO:0000255" key="1">
    <source>
        <dbReference type="HAMAP-Rule" id="MF_00001"/>
    </source>
</evidence>
<keyword id="KW-0665">Pyrimidine biosynthesis</keyword>
<keyword id="KW-0808">Transferase</keyword>
<dbReference type="EC" id="2.1.3.2" evidence="1"/>
<dbReference type="EMBL" id="CP000551">
    <property type="protein sequence ID" value="ABM69542.1"/>
    <property type="molecule type" value="Genomic_DNA"/>
</dbReference>
<dbReference type="RefSeq" id="WP_011817726.1">
    <property type="nucleotide sequence ID" value="NC_008816.1"/>
</dbReference>
<dbReference type="SMR" id="A2BP31"/>
<dbReference type="STRING" id="146891.A9601_02541"/>
<dbReference type="KEGG" id="pmb:A9601_02541"/>
<dbReference type="eggNOG" id="COG0540">
    <property type="taxonomic scope" value="Bacteria"/>
</dbReference>
<dbReference type="HOGENOM" id="CLU_043846_2_0_3"/>
<dbReference type="OrthoDB" id="9774690at2"/>
<dbReference type="UniPathway" id="UPA00070">
    <property type="reaction ID" value="UER00116"/>
</dbReference>
<dbReference type="Proteomes" id="UP000002590">
    <property type="component" value="Chromosome"/>
</dbReference>
<dbReference type="GO" id="GO:0005829">
    <property type="term" value="C:cytosol"/>
    <property type="evidence" value="ECO:0007669"/>
    <property type="project" value="TreeGrafter"/>
</dbReference>
<dbReference type="GO" id="GO:0016597">
    <property type="term" value="F:amino acid binding"/>
    <property type="evidence" value="ECO:0007669"/>
    <property type="project" value="InterPro"/>
</dbReference>
<dbReference type="GO" id="GO:0004070">
    <property type="term" value="F:aspartate carbamoyltransferase activity"/>
    <property type="evidence" value="ECO:0007669"/>
    <property type="project" value="UniProtKB-UniRule"/>
</dbReference>
<dbReference type="GO" id="GO:0006207">
    <property type="term" value="P:'de novo' pyrimidine nucleobase biosynthetic process"/>
    <property type="evidence" value="ECO:0007669"/>
    <property type="project" value="InterPro"/>
</dbReference>
<dbReference type="GO" id="GO:0044205">
    <property type="term" value="P:'de novo' UMP biosynthetic process"/>
    <property type="evidence" value="ECO:0007669"/>
    <property type="project" value="UniProtKB-UniRule"/>
</dbReference>
<dbReference type="GO" id="GO:0006520">
    <property type="term" value="P:amino acid metabolic process"/>
    <property type="evidence" value="ECO:0007669"/>
    <property type="project" value="InterPro"/>
</dbReference>
<dbReference type="Gene3D" id="3.40.50.1370">
    <property type="entry name" value="Aspartate/ornithine carbamoyltransferase"/>
    <property type="match status" value="2"/>
</dbReference>
<dbReference type="HAMAP" id="MF_00001">
    <property type="entry name" value="Asp_carb_tr"/>
    <property type="match status" value="1"/>
</dbReference>
<dbReference type="InterPro" id="IPR006132">
    <property type="entry name" value="Asp/Orn_carbamoyltranf_P-bd"/>
</dbReference>
<dbReference type="InterPro" id="IPR006130">
    <property type="entry name" value="Asp/Orn_carbamoylTrfase"/>
</dbReference>
<dbReference type="InterPro" id="IPR036901">
    <property type="entry name" value="Asp/Orn_carbamoylTrfase_sf"/>
</dbReference>
<dbReference type="InterPro" id="IPR002082">
    <property type="entry name" value="Asp_carbamoyltransf"/>
</dbReference>
<dbReference type="InterPro" id="IPR006131">
    <property type="entry name" value="Asp_carbamoyltransf_Asp/Orn-bd"/>
</dbReference>
<dbReference type="NCBIfam" id="TIGR00670">
    <property type="entry name" value="asp_carb_tr"/>
    <property type="match status" value="1"/>
</dbReference>
<dbReference type="NCBIfam" id="NF002032">
    <property type="entry name" value="PRK00856.1"/>
    <property type="match status" value="1"/>
</dbReference>
<dbReference type="PANTHER" id="PTHR45753:SF6">
    <property type="entry name" value="ASPARTATE CARBAMOYLTRANSFERASE"/>
    <property type="match status" value="1"/>
</dbReference>
<dbReference type="PANTHER" id="PTHR45753">
    <property type="entry name" value="ORNITHINE CARBAMOYLTRANSFERASE, MITOCHONDRIAL"/>
    <property type="match status" value="1"/>
</dbReference>
<dbReference type="Pfam" id="PF00185">
    <property type="entry name" value="OTCace"/>
    <property type="match status" value="1"/>
</dbReference>
<dbReference type="Pfam" id="PF02729">
    <property type="entry name" value="OTCace_N"/>
    <property type="match status" value="1"/>
</dbReference>
<dbReference type="PRINTS" id="PR00100">
    <property type="entry name" value="AOTCASE"/>
</dbReference>
<dbReference type="PRINTS" id="PR00101">
    <property type="entry name" value="ATCASE"/>
</dbReference>
<dbReference type="SUPFAM" id="SSF53671">
    <property type="entry name" value="Aspartate/ornithine carbamoyltransferase"/>
    <property type="match status" value="1"/>
</dbReference>
<dbReference type="PROSITE" id="PS00097">
    <property type="entry name" value="CARBAMOYLTRANSFERASE"/>
    <property type="match status" value="1"/>
</dbReference>
<proteinExistence type="inferred from homology"/>
<feature type="chain" id="PRO_0000301601" description="Aspartate carbamoyltransferase catalytic subunit">
    <location>
        <begin position="1"/>
        <end position="338"/>
    </location>
</feature>
<feature type="binding site" evidence="1">
    <location>
        <position position="59"/>
    </location>
    <ligand>
        <name>carbamoyl phosphate</name>
        <dbReference type="ChEBI" id="CHEBI:58228"/>
    </ligand>
</feature>
<feature type="binding site" evidence="1">
    <location>
        <position position="60"/>
    </location>
    <ligand>
        <name>carbamoyl phosphate</name>
        <dbReference type="ChEBI" id="CHEBI:58228"/>
    </ligand>
</feature>
<feature type="binding site" evidence="1">
    <location>
        <position position="87"/>
    </location>
    <ligand>
        <name>L-aspartate</name>
        <dbReference type="ChEBI" id="CHEBI:29991"/>
    </ligand>
</feature>
<feature type="binding site" evidence="1">
    <location>
        <position position="109"/>
    </location>
    <ligand>
        <name>carbamoyl phosphate</name>
        <dbReference type="ChEBI" id="CHEBI:58228"/>
    </ligand>
</feature>
<feature type="binding site" evidence="1">
    <location>
        <position position="142"/>
    </location>
    <ligand>
        <name>carbamoyl phosphate</name>
        <dbReference type="ChEBI" id="CHEBI:58228"/>
    </ligand>
</feature>
<feature type="binding site" evidence="1">
    <location>
        <position position="145"/>
    </location>
    <ligand>
        <name>carbamoyl phosphate</name>
        <dbReference type="ChEBI" id="CHEBI:58228"/>
    </ligand>
</feature>
<feature type="binding site" evidence="1">
    <location>
        <position position="182"/>
    </location>
    <ligand>
        <name>L-aspartate</name>
        <dbReference type="ChEBI" id="CHEBI:29991"/>
    </ligand>
</feature>
<feature type="binding site" evidence="1">
    <location>
        <position position="253"/>
    </location>
    <ligand>
        <name>L-aspartate</name>
        <dbReference type="ChEBI" id="CHEBI:29991"/>
    </ligand>
</feature>
<feature type="binding site" evidence="1">
    <location>
        <position position="294"/>
    </location>
    <ligand>
        <name>carbamoyl phosphate</name>
        <dbReference type="ChEBI" id="CHEBI:58228"/>
    </ligand>
</feature>
<feature type="binding site" evidence="1">
    <location>
        <position position="295"/>
    </location>
    <ligand>
        <name>carbamoyl phosphate</name>
        <dbReference type="ChEBI" id="CHEBI:58228"/>
    </ligand>
</feature>
<protein>
    <recommendedName>
        <fullName evidence="1">Aspartate carbamoyltransferase catalytic subunit</fullName>
        <ecNumber evidence="1">2.1.3.2</ecNumber>
    </recommendedName>
    <alternativeName>
        <fullName evidence="1">Aspartate transcarbamylase</fullName>
        <shortName evidence="1">ATCase</shortName>
    </alternativeName>
</protein>
<name>PYRB_PROMS</name>
<gene>
    <name evidence="1" type="primary">pyrB</name>
    <name type="ordered locus">A9601_02541</name>
</gene>
<accession>A2BP31</accession>
<comment type="function">
    <text evidence="1">Catalyzes the condensation of carbamoyl phosphate and aspartate to form carbamoyl aspartate and inorganic phosphate, the committed step in the de novo pyrimidine nucleotide biosynthesis pathway.</text>
</comment>
<comment type="catalytic activity">
    <reaction evidence="1">
        <text>carbamoyl phosphate + L-aspartate = N-carbamoyl-L-aspartate + phosphate + H(+)</text>
        <dbReference type="Rhea" id="RHEA:20013"/>
        <dbReference type="ChEBI" id="CHEBI:15378"/>
        <dbReference type="ChEBI" id="CHEBI:29991"/>
        <dbReference type="ChEBI" id="CHEBI:32814"/>
        <dbReference type="ChEBI" id="CHEBI:43474"/>
        <dbReference type="ChEBI" id="CHEBI:58228"/>
        <dbReference type="EC" id="2.1.3.2"/>
    </reaction>
</comment>
<comment type="pathway">
    <text evidence="1">Pyrimidine metabolism; UMP biosynthesis via de novo pathway; (S)-dihydroorotate from bicarbonate: step 2/3.</text>
</comment>
<comment type="subunit">
    <text evidence="1">Heterododecamer (2C3:3R2) of six catalytic PyrB chains organized as two trimers (C3), and six regulatory PyrI chains organized as three dimers (R2).</text>
</comment>
<comment type="similarity">
    <text evidence="1">Belongs to the aspartate/ornithine carbamoyltransferase superfamily. ATCase family.</text>
</comment>
<reference key="1">
    <citation type="journal article" date="2007" name="PLoS Genet.">
        <title>Patterns and implications of gene gain and loss in the evolution of Prochlorococcus.</title>
        <authorList>
            <person name="Kettler G.C."/>
            <person name="Martiny A.C."/>
            <person name="Huang K."/>
            <person name="Zucker J."/>
            <person name="Coleman M.L."/>
            <person name="Rodrigue S."/>
            <person name="Chen F."/>
            <person name="Lapidus A."/>
            <person name="Ferriera S."/>
            <person name="Johnson J."/>
            <person name="Steglich C."/>
            <person name="Church G.M."/>
            <person name="Richardson P."/>
            <person name="Chisholm S.W."/>
        </authorList>
    </citation>
    <scope>NUCLEOTIDE SEQUENCE [LARGE SCALE GENOMIC DNA]</scope>
    <source>
        <strain>AS9601</strain>
    </source>
</reference>
<sequence>MQIWPHKHIHTLANFSIKDYESVFELANRFDALKNAGTKKIPALQGTLVTSLFFEASTRTKNSFELAAKRLSADVQTFAPSSSSLTKGETIIDTAITYSAMGADTLVIRHSSSYITFEIAKKLDAINSKTSVLNAGDGLHSHPSQGLLDIYTLIKFFSPQTLNPEVLNSKKILIIGDVNHSRVARSNLWALSAFGADIILCGPKALIPDEFINFLKTPAPNQTEDPVKSRGSITISRSLEESIKTADAIIVLRLQKERMMENLLSSIDSYSLDYGLTPEKLSLNNKEIPILHPGPINRDIEISSKVVDRYPNCLINNQVANGIPIRMALLYLLQKHNK</sequence>
<organism>
    <name type="scientific">Prochlorococcus marinus (strain AS9601)</name>
    <dbReference type="NCBI Taxonomy" id="146891"/>
    <lineage>
        <taxon>Bacteria</taxon>
        <taxon>Bacillati</taxon>
        <taxon>Cyanobacteriota</taxon>
        <taxon>Cyanophyceae</taxon>
        <taxon>Synechococcales</taxon>
        <taxon>Prochlorococcaceae</taxon>
        <taxon>Prochlorococcus</taxon>
    </lineage>
</organism>